<name>LIN25_CAEEL</name>
<feature type="chain" id="PRO_0000084428" description="Protein lin-25">
    <location>
        <begin position="1"/>
        <end position="1139"/>
    </location>
</feature>
<feature type="short sequence motif" description="Nuclear localization signal">
    <location>
        <begin position="695"/>
        <end position="701"/>
    </location>
</feature>
<feature type="mutagenesis site" description="In sy29; egg-laying defect." evidence="1">
    <original>C</original>
    <variation>Y</variation>
    <location>
        <position position="103"/>
    </location>
</feature>
<feature type="mutagenesis site" description="Disrupts nuclear translocation." evidence="1">
    <location>
        <begin position="695"/>
        <end position="701"/>
    </location>
</feature>
<feature type="mutagenesis site" description="In n545; many defects in reproductive organs; egg-laying defect, sterile, protruding vulva, vulvaless and male mating defect." evidence="3">
    <original>P</original>
    <variation>L</variation>
    <location>
        <position position="751"/>
    </location>
</feature>
<feature type="mutagenesis site" description="In n1772; temperature-sensitive." evidence="4">
    <original>T</original>
    <variation>I</variation>
    <location>
        <position position="840"/>
    </location>
</feature>
<comment type="function">
    <text evidence="1 2 3 4 5">Participates in the inductive signaling pathway downstream of let-60 Ras and the RAF/MAP kinase cascade to regulate specification and differentiation of many cell types (PubMed:11063686). Positively regulates the fate of vulval precursor cells (PubMed:3996896, PubMed:7867931, PubMed:9806929). Required for induction of the P12 and excretory duct cell fates. In males, it is also required for proper formation of spicules. Does not function in the signaling pathway that promotes exit from pachytene (PubMed:11063686). Plays a role in responses to M.nematophilum-mediated bacterial infection by promoting tail swelling and preventing constipation (PubMed:15268855).</text>
</comment>
<comment type="subcellular location">
    <subcellularLocation>
        <location evidence="5">Nucleus</location>
    </subcellularLocation>
    <subcellularLocation>
        <location evidence="5">Cytoplasm</location>
    </subcellularLocation>
</comment>
<comment type="tissue specificity">
    <text evidence="5">Expressed in seam cells and all six vulva precursor cells (VPC). After VPC division, expression is restricted to descendants of the VPC cell lineages P5.p, P6.p and P7.p (at protein level).</text>
</comment>
<comment type="developmental stage">
    <text evidence="5">Expressed in all stages but highest during L1, L2 and L3 stages (at protein level).</text>
</comment>
<reference key="1">
    <citation type="journal article" date="1995" name="Genes Dev.">
        <title>lin-25, a gene required for vulval induction in Caenorhabditis elegans.</title>
        <authorList>
            <person name="Tuck S."/>
            <person name="Greenwald I."/>
        </authorList>
    </citation>
    <scope>NUCLEOTIDE SEQUENCE [MRNA]</scope>
    <scope>FUNCTION</scope>
    <scope>MUTAGENESIS OF THR-840</scope>
    <source>
        <strain>Bristol N2</strain>
    </source>
</reference>
<reference key="2">
    <citation type="journal article" date="1998" name="Science">
        <title>Genome sequence of the nematode C. elegans: a platform for investigating biology.</title>
        <authorList>
            <consortium name="The C. elegans sequencing consortium"/>
        </authorList>
    </citation>
    <scope>NUCLEOTIDE SEQUENCE [LARGE SCALE GENOMIC DNA]</scope>
    <source>
        <strain>Bristol N2</strain>
    </source>
</reference>
<reference key="3">
    <citation type="journal article" date="1985" name="Genetics">
        <title>Identification and characterization of 22 genes that affect the vulval cell lineages of the nematode Caenorhabditis elegans.</title>
        <authorList>
            <person name="Ferguson E.L."/>
            <person name="Horvitz H.R."/>
        </authorList>
    </citation>
    <scope>FUNCTION</scope>
    <scope>MUTAGENESIS OF PRO-751</scope>
</reference>
<reference key="4">
    <citation type="journal article" date="1998" name="Development">
        <title>Caenorhabditis elegans lin-25: cellular focus, protein expression and requirement for sur-2 during induction of vulval fates.</title>
        <authorList>
            <person name="Nilsson L."/>
            <person name="Li X."/>
            <person name="Tiensuu T."/>
            <person name="Auty R."/>
            <person name="Greenwald I."/>
            <person name="Tuck S."/>
        </authorList>
    </citation>
    <scope>FUNCTION</scope>
    <scope>SUBCELLULAR LOCATION</scope>
    <scope>TISSUE SPECIFICITY</scope>
    <scope>DEVELOPMENTAL STAGE</scope>
</reference>
<reference key="5">
    <citation type="journal article" date="2000" name="Genetics">
        <title>Caenorhabditis elegans lin-25: a study of its role in multiple cell fate specification events involving ras and the identification and characterization of evolutionarily conserved domains.</title>
        <authorList>
            <person name="Nilsson L."/>
            <person name="Tiensuu T."/>
            <person name="Tuck S."/>
        </authorList>
    </citation>
    <scope>FUNCTION</scope>
    <scope>MUTAGENESIS OF CYS-103 AND 695-ILE--PRO-701</scope>
</reference>
<reference key="6">
    <citation type="journal article" date="2004" name="Curr. Biol.">
        <title>The ERK MAP kinase cascade mediates tail swelling and a protective response to rectal infection in C. elegans.</title>
        <authorList>
            <person name="Nicholas H.R."/>
            <person name="Hodgkin J."/>
        </authorList>
    </citation>
    <scope>FUNCTION</scope>
</reference>
<accession>Q10573</accession>
<accession>Q7JLH0</accession>
<evidence type="ECO:0000269" key="1">
    <source>
    </source>
</evidence>
<evidence type="ECO:0000269" key="2">
    <source>
    </source>
</evidence>
<evidence type="ECO:0000269" key="3">
    <source>
    </source>
</evidence>
<evidence type="ECO:0000269" key="4">
    <source>
    </source>
</evidence>
<evidence type="ECO:0000269" key="5">
    <source>
    </source>
</evidence>
<keyword id="KW-0963">Cytoplasm</keyword>
<keyword id="KW-0217">Developmental protein</keyword>
<keyword id="KW-0221">Differentiation</keyword>
<keyword id="KW-0539">Nucleus</keyword>
<keyword id="KW-1185">Reference proteome</keyword>
<sequence length="1139" mass="131217">MNSIKIDSSTKIVIEYIDKLRNCSNEKRQKVSSVIRPVDFPGISTQQLCDILIRFAYNGTYIDDVFRDHLLKLVVDKSITWNQVIHSVINTKTDRIYSKCLQCELIREMVNYVQIKSFSDKLHADELISIMKPTVFFLAQLIQDVLSDEDELEMIQIEYGDVRKAYYKPLEALSAFIHDDLCSSLLAFSEASEITHQLELCRDSFSKLRSPDKSATTLVEMLIERHIEKCKPVKFQYIPEGIALFDLKNPSIRILIPIFACFKNHESSKLMAETIQTFAEIMRFYGPDVIFDILHGAILLKCEESMDLLHFPKQHRADFRWQSTTFFYKKLPQIIEYLIRSEKLTVAEVQFGLEKALTDLSMMFDAADVAWQNASFLTLLNELEPVLGKTITDPLRLRRREHMKTNDQLLPFADTDNQLIENTDIDKLLNAVKEVMNLQFGQTEEFSKLFVDKVKTGQTDNFDAITSILITEGRLMEVGKAFVLKNVEAQRSSAVGVNERIQIFDDTFILLSRILIKNPSVSINMFVNGGPGKSDAEQTMFYKWSMRYVKRVAKHRDPEPKDETEYIALRKEVEMLMRLANAEVGIEDDLENDVEEEMPEVQEPNIETQNVDEISIPDPLHLLIENDPTVTAESKETEEVKFNPEGVEQMDTNEKPAEISDSLIEPTLLEEPKDILENIIVPIIKVEAPKPDSPIKKKKDPDVTWHEVHCPLPRISRRTARAYLAQMKEGIPFWKTDDPNLNIGSILAAIPRLGQLLVDEHEEKRNRIDRKSAEENMTNILHAIESMPSLFLCLLEWLDCEPESGARTSLAFTINLSLERYLAVSTHGINYMKWIFIKSTVQQMIDELVDKSPAFPEVTCTAFSTARRFCPFVGRNENPDQLKLKHAWYYMRQQAWASPHALRLLEHANTAREYDVWSHIYISKTIKSGCGDIMTSSVDMIFSFLMLDDLNSIIRIHESLMAFWLSEDAGQCQADGRFDPLSIRVVIRLMTQVLLIAEWTLDRLLNEDPAFVERLNLKEVKAPEPEDPDKREKWIFLLRSMLERTINRFFKIVRKGLLSNVVNTIIQLLKSIAGSADCKAKRLLVKRIPPDLIFQLAYIEPSSVDYSLMNIYCDPDNKEHTQTKIMFLCALRRSQSFSF</sequence>
<gene>
    <name type="primary">lin-25</name>
    <name type="ORF">F56H9.5</name>
</gene>
<protein>
    <recommendedName>
        <fullName>Protein lin-25</fullName>
    </recommendedName>
    <alternativeName>
        <fullName>Abnormal cell lineage protein 25</fullName>
    </alternativeName>
</protein>
<proteinExistence type="evidence at protein level"/>
<dbReference type="EMBL" id="U20168">
    <property type="protein sequence ID" value="AAA66364.1"/>
    <property type="molecule type" value="mRNA"/>
</dbReference>
<dbReference type="EMBL" id="Z74473">
    <property type="protein sequence ID" value="CAA98951.1"/>
    <property type="molecule type" value="Genomic_DNA"/>
</dbReference>
<dbReference type="EMBL" id="Z74476">
    <property type="protein sequence ID" value="CAA98951.1"/>
    <property type="status" value="JOINED"/>
    <property type="molecule type" value="Genomic_DNA"/>
</dbReference>
<dbReference type="PIR" id="T22811">
    <property type="entry name" value="T22811"/>
</dbReference>
<dbReference type="RefSeq" id="NP_506162.1">
    <property type="nucleotide sequence ID" value="NM_073761.8"/>
</dbReference>
<dbReference type="BioGRID" id="44752">
    <property type="interactions" value="11"/>
</dbReference>
<dbReference type="FunCoup" id="Q10573">
    <property type="interactions" value="855"/>
</dbReference>
<dbReference type="IntAct" id="Q10573">
    <property type="interactions" value="1"/>
</dbReference>
<dbReference type="STRING" id="6239.F56H9.5.2"/>
<dbReference type="iPTMnet" id="Q10573"/>
<dbReference type="PaxDb" id="6239-F56H9.5"/>
<dbReference type="PeptideAtlas" id="Q10573"/>
<dbReference type="EnsemblMetazoa" id="F56H9.5.1">
    <property type="protein sequence ID" value="F56H9.5.1"/>
    <property type="gene ID" value="WBGene00003011"/>
</dbReference>
<dbReference type="GeneID" id="179732"/>
<dbReference type="KEGG" id="cel:CELE_F56H9.5"/>
<dbReference type="UCSC" id="F56H9.5">
    <property type="organism name" value="c. elegans"/>
</dbReference>
<dbReference type="AGR" id="WB:WBGene00003011"/>
<dbReference type="CTD" id="179732"/>
<dbReference type="WormBase" id="F56H9.5">
    <property type="protein sequence ID" value="CE05975"/>
    <property type="gene ID" value="WBGene00003011"/>
    <property type="gene designation" value="lin-25"/>
</dbReference>
<dbReference type="eggNOG" id="ENOG502S9A0">
    <property type="taxonomic scope" value="Eukaryota"/>
</dbReference>
<dbReference type="HOGENOM" id="CLU_301410_0_0_1"/>
<dbReference type="InParanoid" id="Q10573"/>
<dbReference type="OMA" id="HCPLPRI"/>
<dbReference type="OrthoDB" id="21216at2759"/>
<dbReference type="SignaLink" id="Q10573"/>
<dbReference type="PRO" id="PR:Q10573"/>
<dbReference type="Proteomes" id="UP000001940">
    <property type="component" value="Chromosome V"/>
</dbReference>
<dbReference type="Bgee" id="WBGene00003011">
    <property type="expression patterns" value="Expressed in embryo and 4 other cell types or tissues"/>
</dbReference>
<dbReference type="GO" id="GO:0005737">
    <property type="term" value="C:cytoplasm"/>
    <property type="evidence" value="ECO:0000314"/>
    <property type="project" value="UniProtKB"/>
</dbReference>
<dbReference type="GO" id="GO:0005634">
    <property type="term" value="C:nucleus"/>
    <property type="evidence" value="ECO:0000314"/>
    <property type="project" value="UniProtKB"/>
</dbReference>
<dbReference type="GO" id="GO:0001708">
    <property type="term" value="P:cell fate specification"/>
    <property type="evidence" value="ECO:0000315"/>
    <property type="project" value="UniProtKB"/>
</dbReference>
<dbReference type="GO" id="GO:0050830">
    <property type="term" value="P:defense response to Gram-positive bacterium"/>
    <property type="evidence" value="ECO:0000315"/>
    <property type="project" value="UniProtKB"/>
</dbReference>
<dbReference type="GO" id="GO:0002119">
    <property type="term" value="P:nematode larval development"/>
    <property type="evidence" value="ECO:0000315"/>
    <property type="project" value="WormBase"/>
</dbReference>
<dbReference type="GO" id="GO:0040025">
    <property type="term" value="P:vulval development"/>
    <property type="evidence" value="ECO:0000315"/>
    <property type="project" value="WormBase"/>
</dbReference>
<organism>
    <name type="scientific">Caenorhabditis elegans</name>
    <dbReference type="NCBI Taxonomy" id="6239"/>
    <lineage>
        <taxon>Eukaryota</taxon>
        <taxon>Metazoa</taxon>
        <taxon>Ecdysozoa</taxon>
        <taxon>Nematoda</taxon>
        <taxon>Chromadorea</taxon>
        <taxon>Rhabditida</taxon>
        <taxon>Rhabditina</taxon>
        <taxon>Rhabditomorpha</taxon>
        <taxon>Rhabditoidea</taxon>
        <taxon>Rhabditidae</taxon>
        <taxon>Peloderinae</taxon>
        <taxon>Caenorhabditis</taxon>
    </lineage>
</organism>